<accession>Q8FDN6</accession>
<sequence>MSQTITQGRLRIDANFKRFVDEEVLPGVELDAAAFWHNVDEIVHDLAPENRQLLAERDRIQAALDEWHRSNPGPVKDKAAYKSFLRELGYLVPQPDHVTVETTGIDSEITSQAGPQLVVPAMNARYALNAANARWGSLYDALYGSDIIPQEGAMVSGYDPQRGEQVIAWVRRFLDESLPLENGSYQDVVAFKVVDKQLRIQLKNGKETTLRTPAQFVGYRGDTAAPTCILLKNNGLHIELQIDANGRIGKDDSAHINDVIVEAAISTILDCEDSVAAVDAEDKILLYRNLLGLMQGTLQEKMEKNGRQIVRKLNDDRQYTAADGSEISLHGRSLLFIRNVGHLMTIPVIWDSEGNEIPEGILDGVMTGAIALYDLKVQKNSRTGSVYIVKPKMHGPQEVAFANKLFSRVETMLGMAPNTLKMGIMDEERRTSLNLRSCIAQARNRVAFINTGFLDRTGDEMHSVMEAGPMLRKNQMKSTPWIKAYERNNVLSGLFCGLRGKAQIGKGMWAMPDLMADMYSQKGDQLRAGANTAWVPSPTAATLHALHYHQTNVQSVQANIAQTEFNAEFEPLLDDLLTIPVAENANWSVEEIQQELDNNVQGILGYVVRWVEQGIGCSKVPDIHNVALMEDRATLRISSQHIANWLRHGILTKEQVQASLENMAKVVDQQNAGDPAYRPMAGNFANSCAFKAASDLIFLGVKQPNGYTEPLLHAWRLREKESH</sequence>
<name>MASZ_ECOL6</name>
<gene>
    <name evidence="2" type="primary">glcB</name>
    <name type="ordered locus">c3705</name>
</gene>
<protein>
    <recommendedName>
        <fullName evidence="2">Malate synthase G</fullName>
        <ecNumber evidence="2">2.3.3.9</ecNumber>
    </recommendedName>
</protein>
<evidence type="ECO:0000250" key="1"/>
<evidence type="ECO:0000255" key="2">
    <source>
        <dbReference type="HAMAP-Rule" id="MF_00641"/>
    </source>
</evidence>
<keyword id="KW-0963">Cytoplasm</keyword>
<keyword id="KW-0329">Glyoxylate bypass</keyword>
<keyword id="KW-0460">Magnesium</keyword>
<keyword id="KW-0479">Metal-binding</keyword>
<keyword id="KW-0558">Oxidation</keyword>
<keyword id="KW-1185">Reference proteome</keyword>
<keyword id="KW-0808">Transferase</keyword>
<keyword id="KW-0816">Tricarboxylic acid cycle</keyword>
<comment type="function">
    <text evidence="2">Involved in the glycolate utilization. Catalyzes the condensation and subsequent hydrolysis of acetyl-coenzyme A (acetyl-CoA) and glyoxylate to form malate and CoA.</text>
</comment>
<comment type="catalytic activity">
    <reaction evidence="2">
        <text>glyoxylate + acetyl-CoA + H2O = (S)-malate + CoA + H(+)</text>
        <dbReference type="Rhea" id="RHEA:18181"/>
        <dbReference type="ChEBI" id="CHEBI:15377"/>
        <dbReference type="ChEBI" id="CHEBI:15378"/>
        <dbReference type="ChEBI" id="CHEBI:15589"/>
        <dbReference type="ChEBI" id="CHEBI:36655"/>
        <dbReference type="ChEBI" id="CHEBI:57287"/>
        <dbReference type="ChEBI" id="CHEBI:57288"/>
        <dbReference type="EC" id="2.3.3.9"/>
    </reaction>
</comment>
<comment type="cofactor">
    <cofactor evidence="2">
        <name>Mg(2+)</name>
        <dbReference type="ChEBI" id="CHEBI:18420"/>
    </cofactor>
</comment>
<comment type="pathway">
    <text evidence="2">Carbohydrate metabolism; glyoxylate cycle; (S)-malate from isocitrate: step 2/2.</text>
</comment>
<comment type="subunit">
    <text evidence="2">Monomer.</text>
</comment>
<comment type="subcellular location">
    <subcellularLocation>
        <location evidence="2">Cytoplasm</location>
    </subcellularLocation>
</comment>
<comment type="similarity">
    <text evidence="2">Belongs to the malate synthase family. GlcB subfamily.</text>
</comment>
<feature type="initiator methionine" description="Removed" evidence="1">
    <location>
        <position position="1"/>
    </location>
</feature>
<feature type="chain" id="PRO_0000166887" description="Malate synthase G">
    <location>
        <begin position="2"/>
        <end position="723"/>
    </location>
</feature>
<feature type="active site" description="Proton acceptor" evidence="2">
    <location>
        <position position="338"/>
    </location>
</feature>
<feature type="active site" description="Proton donor" evidence="2">
    <location>
        <position position="631"/>
    </location>
</feature>
<feature type="binding site" evidence="2">
    <location>
        <position position="118"/>
    </location>
    <ligand>
        <name>acetyl-CoA</name>
        <dbReference type="ChEBI" id="CHEBI:57288"/>
    </ligand>
</feature>
<feature type="binding site" evidence="2">
    <location>
        <begin position="125"/>
        <end position="126"/>
    </location>
    <ligand>
        <name>acetyl-CoA</name>
        <dbReference type="ChEBI" id="CHEBI:57288"/>
    </ligand>
</feature>
<feature type="binding site" evidence="2">
    <location>
        <position position="274"/>
    </location>
    <ligand>
        <name>acetyl-CoA</name>
        <dbReference type="ChEBI" id="CHEBI:57288"/>
    </ligand>
</feature>
<feature type="binding site" evidence="2">
    <location>
        <position position="311"/>
    </location>
    <ligand>
        <name>acetyl-CoA</name>
        <dbReference type="ChEBI" id="CHEBI:57288"/>
    </ligand>
</feature>
<feature type="binding site" evidence="2">
    <location>
        <position position="338"/>
    </location>
    <ligand>
        <name>glyoxylate</name>
        <dbReference type="ChEBI" id="CHEBI:36655"/>
    </ligand>
</feature>
<feature type="binding site" evidence="2">
    <location>
        <position position="427"/>
    </location>
    <ligand>
        <name>glyoxylate</name>
        <dbReference type="ChEBI" id="CHEBI:36655"/>
    </ligand>
</feature>
<feature type="binding site" evidence="2">
    <location>
        <position position="427"/>
    </location>
    <ligand>
        <name>Mg(2+)</name>
        <dbReference type="ChEBI" id="CHEBI:18420"/>
    </ligand>
</feature>
<feature type="binding site" evidence="2">
    <location>
        <begin position="452"/>
        <end position="455"/>
    </location>
    <ligand>
        <name>glyoxylate</name>
        <dbReference type="ChEBI" id="CHEBI:36655"/>
    </ligand>
</feature>
<feature type="binding site" evidence="2">
    <location>
        <position position="455"/>
    </location>
    <ligand>
        <name>Mg(2+)</name>
        <dbReference type="ChEBI" id="CHEBI:18420"/>
    </ligand>
</feature>
<feature type="binding site" evidence="2">
    <location>
        <position position="536"/>
    </location>
    <ligand>
        <name>acetyl-CoA</name>
        <dbReference type="ChEBI" id="CHEBI:57288"/>
    </ligand>
</feature>
<feature type="modified residue" description="Cysteine sulfenic acid (-SOH)" evidence="2">
    <location>
        <position position="617"/>
    </location>
</feature>
<feature type="modified residue" description="Cysteine sulfenic acid (-SOH)" evidence="2">
    <location>
        <position position="688"/>
    </location>
</feature>
<dbReference type="EC" id="2.3.3.9" evidence="2"/>
<dbReference type="EMBL" id="AE014075">
    <property type="protein sequence ID" value="AAN82151.1"/>
    <property type="molecule type" value="Genomic_DNA"/>
</dbReference>
<dbReference type="RefSeq" id="WP_000084104.1">
    <property type="nucleotide sequence ID" value="NZ_CP051263.1"/>
</dbReference>
<dbReference type="BMRB" id="Q8FDN6"/>
<dbReference type="SMR" id="Q8FDN6"/>
<dbReference type="STRING" id="199310.c3705"/>
<dbReference type="KEGG" id="ecc:c3705"/>
<dbReference type="eggNOG" id="COG2225">
    <property type="taxonomic scope" value="Bacteria"/>
</dbReference>
<dbReference type="HOGENOM" id="CLU_028446_1_0_6"/>
<dbReference type="BioCyc" id="ECOL199310:C3705-MONOMER"/>
<dbReference type="UniPathway" id="UPA00703">
    <property type="reaction ID" value="UER00720"/>
</dbReference>
<dbReference type="Proteomes" id="UP000001410">
    <property type="component" value="Chromosome"/>
</dbReference>
<dbReference type="GO" id="GO:0005829">
    <property type="term" value="C:cytosol"/>
    <property type="evidence" value="ECO:0007669"/>
    <property type="project" value="TreeGrafter"/>
</dbReference>
<dbReference type="GO" id="GO:0000287">
    <property type="term" value="F:magnesium ion binding"/>
    <property type="evidence" value="ECO:0007669"/>
    <property type="project" value="TreeGrafter"/>
</dbReference>
<dbReference type="GO" id="GO:0004474">
    <property type="term" value="F:malate synthase activity"/>
    <property type="evidence" value="ECO:0007669"/>
    <property type="project" value="UniProtKB-UniRule"/>
</dbReference>
<dbReference type="GO" id="GO:0009436">
    <property type="term" value="P:glyoxylate catabolic process"/>
    <property type="evidence" value="ECO:0007669"/>
    <property type="project" value="TreeGrafter"/>
</dbReference>
<dbReference type="GO" id="GO:0006097">
    <property type="term" value="P:glyoxylate cycle"/>
    <property type="evidence" value="ECO:0007669"/>
    <property type="project" value="UniProtKB-UniRule"/>
</dbReference>
<dbReference type="GO" id="GO:0006099">
    <property type="term" value="P:tricarboxylic acid cycle"/>
    <property type="evidence" value="ECO:0007669"/>
    <property type="project" value="UniProtKB-KW"/>
</dbReference>
<dbReference type="CDD" id="cd00728">
    <property type="entry name" value="malate_synt_G"/>
    <property type="match status" value="1"/>
</dbReference>
<dbReference type="FunFam" id="1.20.1220.12:FF:000002">
    <property type="entry name" value="Malate synthase G"/>
    <property type="match status" value="1"/>
</dbReference>
<dbReference type="FunFam" id="3.20.20.360:FF:000002">
    <property type="entry name" value="Malate synthase G"/>
    <property type="match status" value="1"/>
</dbReference>
<dbReference type="Gene3D" id="3.20.20.360">
    <property type="entry name" value="Malate synthase, domain 3"/>
    <property type="match status" value="2"/>
</dbReference>
<dbReference type="Gene3D" id="1.20.1220.12">
    <property type="entry name" value="Malate synthase, domain III"/>
    <property type="match status" value="1"/>
</dbReference>
<dbReference type="HAMAP" id="MF_00641">
    <property type="entry name" value="Malate_synth_G"/>
    <property type="match status" value="1"/>
</dbReference>
<dbReference type="InterPro" id="IPR044856">
    <property type="entry name" value="Malate_synth_C_sf"/>
</dbReference>
<dbReference type="InterPro" id="IPR011076">
    <property type="entry name" value="Malate_synth_sf"/>
</dbReference>
<dbReference type="InterPro" id="IPR001465">
    <property type="entry name" value="Malate_synthase_TIM"/>
</dbReference>
<dbReference type="InterPro" id="IPR006253">
    <property type="entry name" value="Malate_synthG"/>
</dbReference>
<dbReference type="InterPro" id="IPR048355">
    <property type="entry name" value="MS_C"/>
</dbReference>
<dbReference type="InterPro" id="IPR048356">
    <property type="entry name" value="MS_N"/>
</dbReference>
<dbReference type="InterPro" id="IPR046363">
    <property type="entry name" value="MS_N_TIM-barrel_dom"/>
</dbReference>
<dbReference type="InterPro" id="IPR048357">
    <property type="entry name" value="MSG_insertion"/>
</dbReference>
<dbReference type="NCBIfam" id="TIGR01345">
    <property type="entry name" value="malate_syn_G"/>
    <property type="match status" value="1"/>
</dbReference>
<dbReference type="NCBIfam" id="NF002825">
    <property type="entry name" value="PRK02999.1"/>
    <property type="match status" value="1"/>
</dbReference>
<dbReference type="PANTHER" id="PTHR42739">
    <property type="entry name" value="MALATE SYNTHASE G"/>
    <property type="match status" value="1"/>
</dbReference>
<dbReference type="PANTHER" id="PTHR42739:SF1">
    <property type="entry name" value="MALATE SYNTHASE G"/>
    <property type="match status" value="1"/>
</dbReference>
<dbReference type="Pfam" id="PF20659">
    <property type="entry name" value="MS_C"/>
    <property type="match status" value="1"/>
</dbReference>
<dbReference type="Pfam" id="PF20656">
    <property type="entry name" value="MS_N"/>
    <property type="match status" value="1"/>
</dbReference>
<dbReference type="Pfam" id="PF01274">
    <property type="entry name" value="MS_TIM-barrel"/>
    <property type="match status" value="1"/>
</dbReference>
<dbReference type="Pfam" id="PF20658">
    <property type="entry name" value="MSG_insertion"/>
    <property type="match status" value="1"/>
</dbReference>
<dbReference type="SUPFAM" id="SSF51645">
    <property type="entry name" value="Malate synthase G"/>
    <property type="match status" value="1"/>
</dbReference>
<proteinExistence type="inferred from homology"/>
<organism>
    <name type="scientific">Escherichia coli O6:H1 (strain CFT073 / ATCC 700928 / UPEC)</name>
    <dbReference type="NCBI Taxonomy" id="199310"/>
    <lineage>
        <taxon>Bacteria</taxon>
        <taxon>Pseudomonadati</taxon>
        <taxon>Pseudomonadota</taxon>
        <taxon>Gammaproteobacteria</taxon>
        <taxon>Enterobacterales</taxon>
        <taxon>Enterobacteriaceae</taxon>
        <taxon>Escherichia</taxon>
    </lineage>
</organism>
<reference key="1">
    <citation type="journal article" date="2002" name="Proc. Natl. Acad. Sci. U.S.A.">
        <title>Extensive mosaic structure revealed by the complete genome sequence of uropathogenic Escherichia coli.</title>
        <authorList>
            <person name="Welch R.A."/>
            <person name="Burland V."/>
            <person name="Plunkett G. III"/>
            <person name="Redford P."/>
            <person name="Roesch P."/>
            <person name="Rasko D."/>
            <person name="Buckles E.L."/>
            <person name="Liou S.-R."/>
            <person name="Boutin A."/>
            <person name="Hackett J."/>
            <person name="Stroud D."/>
            <person name="Mayhew G.F."/>
            <person name="Rose D.J."/>
            <person name="Zhou S."/>
            <person name="Schwartz D.C."/>
            <person name="Perna N.T."/>
            <person name="Mobley H.L.T."/>
            <person name="Donnenberg M.S."/>
            <person name="Blattner F.R."/>
        </authorList>
    </citation>
    <scope>NUCLEOTIDE SEQUENCE [LARGE SCALE GENOMIC DNA]</scope>
    <source>
        <strain>CFT073 / ATCC 700928 / UPEC</strain>
    </source>
</reference>